<feature type="chain" id="PRO_0000134477" description="Deoxyhypusine synthase">
    <location>
        <begin position="1"/>
        <end position="376"/>
    </location>
</feature>
<feature type="active site" description="Nucleophile" evidence="1">
    <location>
        <position position="338"/>
    </location>
</feature>
<feature type="binding site" evidence="1">
    <location>
        <begin position="112"/>
        <end position="116"/>
    </location>
    <ligand>
        <name>NAD(+)</name>
        <dbReference type="ChEBI" id="CHEBI:57540"/>
    </ligand>
</feature>
<feature type="binding site" evidence="1">
    <location>
        <begin position="138"/>
        <end position="140"/>
    </location>
    <ligand>
        <name>NAD(+)</name>
        <dbReference type="ChEBI" id="CHEBI:57540"/>
    </ligand>
</feature>
<feature type="binding site" evidence="1">
    <location>
        <begin position="143"/>
        <end position="144"/>
    </location>
    <ligand>
        <name>spermidine</name>
        <dbReference type="ChEBI" id="CHEBI:57834"/>
    </ligand>
</feature>
<feature type="binding site" evidence="1">
    <location>
        <position position="144"/>
    </location>
    <ligand>
        <name>NAD(+)</name>
        <dbReference type="ChEBI" id="CHEBI:57540"/>
    </ligand>
</feature>
<feature type="binding site" evidence="1">
    <location>
        <position position="245"/>
    </location>
    <ligand>
        <name>NAD(+)</name>
        <dbReference type="ChEBI" id="CHEBI:57540"/>
    </ligand>
</feature>
<feature type="binding site" evidence="1">
    <location>
        <position position="250"/>
    </location>
    <ligand>
        <name>spermidine</name>
        <dbReference type="ChEBI" id="CHEBI:57834"/>
    </ligand>
</feature>
<feature type="binding site" evidence="1">
    <location>
        <position position="292"/>
    </location>
    <ligand>
        <name>NAD(+)</name>
        <dbReference type="ChEBI" id="CHEBI:57540"/>
    </ligand>
</feature>
<feature type="binding site" evidence="1">
    <location>
        <position position="297"/>
    </location>
    <ligand>
        <name>spermidine</name>
        <dbReference type="ChEBI" id="CHEBI:57834"/>
    </ligand>
</feature>
<feature type="binding site" evidence="1">
    <location>
        <begin position="317"/>
        <end position="318"/>
    </location>
    <ligand>
        <name>NAD(+)</name>
        <dbReference type="ChEBI" id="CHEBI:57540"/>
    </ligand>
</feature>
<feature type="binding site" evidence="1">
    <location>
        <begin position="323"/>
        <end position="325"/>
    </location>
    <ligand>
        <name>spermidine</name>
        <dbReference type="ChEBI" id="CHEBI:57834"/>
    </ligand>
</feature>
<feature type="binding site" evidence="1">
    <location>
        <begin position="332"/>
        <end position="338"/>
    </location>
    <ligand>
        <name>spermidine</name>
        <dbReference type="ChEBI" id="CHEBI:57834"/>
    </ligand>
</feature>
<feature type="binding site" evidence="1">
    <location>
        <begin position="351"/>
        <end position="352"/>
    </location>
    <ligand>
        <name>NAD(+)</name>
        <dbReference type="ChEBI" id="CHEBI:57540"/>
    </ligand>
</feature>
<reference key="1">
    <citation type="journal article" date="2001" name="J. Biol. Chem.">
        <title>Isolation and characterization of senescence-induced cDNAs encoding deoxyhypusine synthase and eucaryotic translation initiation factor 5A from tomato.</title>
        <authorList>
            <person name="Wang T.-W."/>
            <person name="Lu L."/>
            <person name="Wang D."/>
            <person name="Thompson J.E."/>
        </authorList>
    </citation>
    <scope>NUCLEOTIDE SEQUENCE [MRNA]</scope>
    <source>
        <tissue>Fruit</tissue>
    </source>
</reference>
<evidence type="ECO:0000250" key="1"/>
<evidence type="ECO:0000305" key="2"/>
<dbReference type="EC" id="2.5.1.46"/>
<dbReference type="EMBL" id="AF296079">
    <property type="protein sequence ID" value="AAG53643.1"/>
    <property type="molecule type" value="mRNA"/>
</dbReference>
<dbReference type="SMR" id="Q9AXQ9"/>
<dbReference type="UniPathway" id="UPA00354"/>
<dbReference type="GO" id="GO:0005737">
    <property type="term" value="C:cytoplasm"/>
    <property type="evidence" value="ECO:0007669"/>
    <property type="project" value="TreeGrafter"/>
</dbReference>
<dbReference type="GO" id="GO:0034038">
    <property type="term" value="F:deoxyhypusine synthase activity"/>
    <property type="evidence" value="ECO:0007669"/>
    <property type="project" value="UniProtKB-EC"/>
</dbReference>
<dbReference type="FunFam" id="3.40.910.10:FF:000002">
    <property type="entry name" value="Deoxyhypusine synthase"/>
    <property type="match status" value="1"/>
</dbReference>
<dbReference type="Gene3D" id="3.40.910.10">
    <property type="entry name" value="Deoxyhypusine synthase"/>
    <property type="match status" value="1"/>
</dbReference>
<dbReference type="InterPro" id="IPR002773">
    <property type="entry name" value="Deoxyhypusine_synthase"/>
</dbReference>
<dbReference type="InterPro" id="IPR036982">
    <property type="entry name" value="Deoxyhypusine_synthase_sf"/>
</dbReference>
<dbReference type="InterPro" id="IPR029035">
    <property type="entry name" value="DHS-like_NAD/FAD-binding_dom"/>
</dbReference>
<dbReference type="NCBIfam" id="TIGR00321">
    <property type="entry name" value="dhys"/>
    <property type="match status" value="1"/>
</dbReference>
<dbReference type="PANTHER" id="PTHR11703">
    <property type="entry name" value="DEOXYHYPUSINE SYNTHASE"/>
    <property type="match status" value="1"/>
</dbReference>
<dbReference type="PANTHER" id="PTHR11703:SF0">
    <property type="entry name" value="DEOXYHYPUSINE SYNTHASE"/>
    <property type="match status" value="1"/>
</dbReference>
<dbReference type="Pfam" id="PF01916">
    <property type="entry name" value="DS"/>
    <property type="match status" value="1"/>
</dbReference>
<dbReference type="SUPFAM" id="SSF52467">
    <property type="entry name" value="DHS-like NAD/FAD-binding domain"/>
    <property type="match status" value="1"/>
</dbReference>
<accession>Q9AXQ9</accession>
<protein>
    <recommendedName>
        <fullName>Deoxyhypusine synthase</fullName>
        <ecNumber>2.5.1.46</ecNumber>
    </recommendedName>
</protein>
<organism>
    <name type="scientific">Musa acuminata</name>
    <name type="common">Banana</name>
    <name type="synonym">Musa cavendishii</name>
    <dbReference type="NCBI Taxonomy" id="4641"/>
    <lineage>
        <taxon>Eukaryota</taxon>
        <taxon>Viridiplantae</taxon>
        <taxon>Streptophyta</taxon>
        <taxon>Embryophyta</taxon>
        <taxon>Tracheophyta</taxon>
        <taxon>Spermatophyta</taxon>
        <taxon>Magnoliopsida</taxon>
        <taxon>Liliopsida</taxon>
        <taxon>Zingiberales</taxon>
        <taxon>Musaceae</taxon>
        <taxon>Musa</taxon>
    </lineage>
</organism>
<comment type="function">
    <text evidence="1">Catalyzes the NAD-dependent oxidative cleavage of spermidine and the subsequent transfer of the butylamine moiety of spermidine to the epsilon-amino group of a specific lysine residue of the eIF-5A precursor protein to form the intermediate deoxyhypusine residue. Also able to produce homospermidine from putrescine (By similarity).</text>
</comment>
<comment type="catalytic activity">
    <reaction>
        <text>[eIF5A protein]-L-lysine + spermidine = [eIF5A protein]-deoxyhypusine + propane-1,3-diamine</text>
        <dbReference type="Rhea" id="RHEA:33299"/>
        <dbReference type="Rhea" id="RHEA-COMP:10143"/>
        <dbReference type="Rhea" id="RHEA-COMP:10144"/>
        <dbReference type="ChEBI" id="CHEBI:29969"/>
        <dbReference type="ChEBI" id="CHEBI:57484"/>
        <dbReference type="ChEBI" id="CHEBI:57834"/>
        <dbReference type="ChEBI" id="CHEBI:82657"/>
        <dbReference type="EC" id="2.5.1.46"/>
    </reaction>
</comment>
<comment type="cofactor">
    <cofactor>
        <name>NAD(+)</name>
        <dbReference type="ChEBI" id="CHEBI:57540"/>
    </cofactor>
</comment>
<comment type="pathway">
    <text>Protein modification; eIF5A hypusination.</text>
</comment>
<comment type="similarity">
    <text evidence="2">Belongs to the deoxyhypusine synthase family.</text>
</comment>
<name>DHYS_MUSAC</name>
<keyword id="KW-0386">Hypusine biosynthesis</keyword>
<keyword id="KW-0520">NAD</keyword>
<keyword id="KW-0808">Transferase</keyword>
<proteinExistence type="evidence at transcript level"/>
<sequence>MEGGAAGGQRDRETLDAVRSVVFKPSVSLEEKRFPRVQGYDFNRGCDLIGLLDSISSTGFQASNLGDAIDVINQMIDWRLSHDAPTEDCSEEERNLAYRQSVTCKIFLGFTSNLVSSGIREIIRFLVQHRMVEVLVTTAGGIEEDLIKCLAPTYKGDFSLPGSYLRSKGLNRIGNLLVPNDNYCKFEDWIMPILDQMLLEQTTENVVWTPSKVIARLGKEINDESSYLYWAYKNNVSVYCPALTDGSLGDMLYCHSVRNPGLLIDIVQDIRAMNGEAVHVGLRKTGVIILGGGLPKHHICNANMFRNGADYAVYVNTAQEFDGSDSGAEPDEAISWGKIKGSAKTIKVHCDATIAFPLLVAATFARKFQERNNKLA</sequence>
<gene>
    <name type="primary">DHS</name>
</gene>